<sequence length="356" mass="36560">MQTLHALLRDIPAPDAEAMARAQQHIDGLLKPPGSLGRLETLAVQLAGMPGLNGTPQVGEKAVLVMCADHGVWDEGVAVSPKIVTAIQAANMTQGTTGVCVLAAQAGAKVHVIDVGIDAEPIPGVVDMRVARGCGNIAVGPAMSRSQAEALLLEVSRYTCDLAKRGVTLFGVGELGMANTTPAAAMVSVFTGSDAKEVVGIGANLPPSRIDNKVDVVRRAIAINQPNPRDGIDVLSKVGGFDLVGMTGVMLGAARCGLPVLLDGFLSYSAALAACQIAPAVRPYLIPSHFSAEKGARIALAHLSMEPYLHMAMRLGEGSGAALAMPIVEAACAMFHNMGELAASNIVLPEGNANAT</sequence>
<name>COBT_SALPK</name>
<evidence type="ECO:0000255" key="1">
    <source>
        <dbReference type="HAMAP-Rule" id="MF_00230"/>
    </source>
</evidence>
<accession>B5BG60</accession>
<proteinExistence type="inferred from homology"/>
<reference key="1">
    <citation type="journal article" date="2009" name="BMC Genomics">
        <title>Pseudogene accumulation in the evolutionary histories of Salmonella enterica serovars Paratyphi A and Typhi.</title>
        <authorList>
            <person name="Holt K.E."/>
            <person name="Thomson N.R."/>
            <person name="Wain J."/>
            <person name="Langridge G.C."/>
            <person name="Hasan R."/>
            <person name="Bhutta Z.A."/>
            <person name="Quail M.A."/>
            <person name="Norbertczak H."/>
            <person name="Walker D."/>
            <person name="Simmonds M."/>
            <person name="White B."/>
            <person name="Bason N."/>
            <person name="Mungall K."/>
            <person name="Dougan G."/>
            <person name="Parkhill J."/>
        </authorList>
    </citation>
    <scope>NUCLEOTIDE SEQUENCE [LARGE SCALE GENOMIC DNA]</scope>
    <source>
        <strain>AKU_12601</strain>
    </source>
</reference>
<gene>
    <name evidence="1" type="primary">cobT</name>
    <name type="ordered locus">SSPA0800</name>
</gene>
<feature type="chain" id="PRO_1000100479" description="Nicotinate-nucleotide--dimethylbenzimidazole phosphoribosyltransferase">
    <location>
        <begin position="1"/>
        <end position="356"/>
    </location>
</feature>
<feature type="active site" description="Proton acceptor" evidence="1">
    <location>
        <position position="317"/>
    </location>
</feature>
<protein>
    <recommendedName>
        <fullName evidence="1">Nicotinate-nucleotide--dimethylbenzimidazole phosphoribosyltransferase</fullName>
        <shortName evidence="1">NN:DBI PRT</shortName>
        <ecNumber evidence="1">2.4.2.21</ecNumber>
    </recommendedName>
    <alternativeName>
        <fullName evidence="1">N(1)-alpha-phosphoribosyltransferase</fullName>
    </alternativeName>
</protein>
<comment type="function">
    <text evidence="1">Catalyzes the synthesis of alpha-ribazole-5'-phosphate from nicotinate mononucleotide (NAMN) and 5,6-dimethylbenzimidazole (DMB).</text>
</comment>
<comment type="catalytic activity">
    <reaction evidence="1">
        <text>5,6-dimethylbenzimidazole + nicotinate beta-D-ribonucleotide = alpha-ribazole 5'-phosphate + nicotinate + H(+)</text>
        <dbReference type="Rhea" id="RHEA:11196"/>
        <dbReference type="ChEBI" id="CHEBI:15378"/>
        <dbReference type="ChEBI" id="CHEBI:15890"/>
        <dbReference type="ChEBI" id="CHEBI:32544"/>
        <dbReference type="ChEBI" id="CHEBI:57502"/>
        <dbReference type="ChEBI" id="CHEBI:57918"/>
        <dbReference type="EC" id="2.4.2.21"/>
    </reaction>
</comment>
<comment type="pathway">
    <text evidence="1">Nucleoside biosynthesis; alpha-ribazole biosynthesis; alpha-ribazole from 5,6-dimethylbenzimidazole: step 1/2.</text>
</comment>
<comment type="subunit">
    <text evidence="1">Homodimer.</text>
</comment>
<comment type="similarity">
    <text evidence="1">Belongs to the CobT family.</text>
</comment>
<dbReference type="EC" id="2.4.2.21" evidence="1"/>
<dbReference type="EMBL" id="FM200053">
    <property type="protein sequence ID" value="CAR58941.1"/>
    <property type="molecule type" value="Genomic_DNA"/>
</dbReference>
<dbReference type="RefSeq" id="WP_001193973.1">
    <property type="nucleotide sequence ID" value="NC_011147.1"/>
</dbReference>
<dbReference type="SMR" id="B5BG60"/>
<dbReference type="KEGG" id="sek:SSPA0800"/>
<dbReference type="HOGENOM" id="CLU_002982_0_0_6"/>
<dbReference type="UniPathway" id="UPA00061">
    <property type="reaction ID" value="UER00516"/>
</dbReference>
<dbReference type="Proteomes" id="UP000001869">
    <property type="component" value="Chromosome"/>
</dbReference>
<dbReference type="GO" id="GO:0008939">
    <property type="term" value="F:nicotinate-nucleotide-dimethylbenzimidazole phosphoribosyltransferase activity"/>
    <property type="evidence" value="ECO:0007669"/>
    <property type="project" value="UniProtKB-UniRule"/>
</dbReference>
<dbReference type="GO" id="GO:0009236">
    <property type="term" value="P:cobalamin biosynthetic process"/>
    <property type="evidence" value="ECO:0007669"/>
    <property type="project" value="UniProtKB-KW"/>
</dbReference>
<dbReference type="CDD" id="cd02439">
    <property type="entry name" value="DMB-PRT_CobT"/>
    <property type="match status" value="1"/>
</dbReference>
<dbReference type="FunFam" id="1.10.1610.10:FF:000001">
    <property type="entry name" value="Nicotinate-nucleotide--dimethylbenzimidazole phosphoribosyltransferase"/>
    <property type="match status" value="1"/>
</dbReference>
<dbReference type="FunFam" id="3.40.50.10210:FF:000001">
    <property type="entry name" value="Nicotinate-nucleotide--dimethylbenzimidazole phosphoribosyltransferase"/>
    <property type="match status" value="1"/>
</dbReference>
<dbReference type="Gene3D" id="1.10.1610.10">
    <property type="match status" value="1"/>
</dbReference>
<dbReference type="Gene3D" id="3.40.50.10210">
    <property type="match status" value="1"/>
</dbReference>
<dbReference type="HAMAP" id="MF_00230">
    <property type="entry name" value="CobT"/>
    <property type="match status" value="1"/>
</dbReference>
<dbReference type="InterPro" id="IPR003200">
    <property type="entry name" value="Nict_dMeBzImd_PRibTrfase"/>
</dbReference>
<dbReference type="InterPro" id="IPR017846">
    <property type="entry name" value="Nict_dMeBzImd_PRibTrfase_bact"/>
</dbReference>
<dbReference type="InterPro" id="IPR023195">
    <property type="entry name" value="Nict_dMeBzImd_PRibTrfase_N"/>
</dbReference>
<dbReference type="InterPro" id="IPR036087">
    <property type="entry name" value="Nict_dMeBzImd_PRibTrfase_sf"/>
</dbReference>
<dbReference type="NCBIfam" id="TIGR03160">
    <property type="entry name" value="cobT_DBIPRT"/>
    <property type="match status" value="1"/>
</dbReference>
<dbReference type="NCBIfam" id="NF000996">
    <property type="entry name" value="PRK00105.1"/>
    <property type="match status" value="1"/>
</dbReference>
<dbReference type="PANTHER" id="PTHR43463">
    <property type="entry name" value="NICOTINATE-NUCLEOTIDE--DIMETHYLBENZIMIDAZOLE PHOSPHORIBOSYLTRANSFERASE"/>
    <property type="match status" value="1"/>
</dbReference>
<dbReference type="PANTHER" id="PTHR43463:SF1">
    <property type="entry name" value="NICOTINATE-NUCLEOTIDE--DIMETHYLBENZIMIDAZOLE PHOSPHORIBOSYLTRANSFERASE"/>
    <property type="match status" value="1"/>
</dbReference>
<dbReference type="Pfam" id="PF02277">
    <property type="entry name" value="DBI_PRT"/>
    <property type="match status" value="1"/>
</dbReference>
<dbReference type="SUPFAM" id="SSF52733">
    <property type="entry name" value="Nicotinate mononucleotide:5,6-dimethylbenzimidazole phosphoribosyltransferase (CobT)"/>
    <property type="match status" value="1"/>
</dbReference>
<keyword id="KW-0169">Cobalamin biosynthesis</keyword>
<keyword id="KW-0328">Glycosyltransferase</keyword>
<keyword id="KW-0808">Transferase</keyword>
<organism>
    <name type="scientific">Salmonella paratyphi A (strain AKU_12601)</name>
    <dbReference type="NCBI Taxonomy" id="554290"/>
    <lineage>
        <taxon>Bacteria</taxon>
        <taxon>Pseudomonadati</taxon>
        <taxon>Pseudomonadota</taxon>
        <taxon>Gammaproteobacteria</taxon>
        <taxon>Enterobacterales</taxon>
        <taxon>Enterobacteriaceae</taxon>
        <taxon>Salmonella</taxon>
    </lineage>
</organism>